<feature type="chain" id="PRO_0000353665" description="NAD(P)H-quinone oxidoreductase subunit L">
    <location>
        <begin position="1"/>
        <end position="69"/>
    </location>
</feature>
<feature type="transmembrane region" description="Helical" evidence="1">
    <location>
        <begin position="5"/>
        <end position="25"/>
    </location>
</feature>
<feature type="transmembrane region" description="Helical" evidence="1">
    <location>
        <begin position="40"/>
        <end position="60"/>
    </location>
</feature>
<reference key="1">
    <citation type="journal article" date="2008" name="Proc. Natl. Acad. Sci. U.S.A.">
        <title>Niche adaptation and genome expansion in the chlorophyll d-producing cyanobacterium Acaryochloris marina.</title>
        <authorList>
            <person name="Swingley W.D."/>
            <person name="Chen M."/>
            <person name="Cheung P.C."/>
            <person name="Conrad A.L."/>
            <person name="Dejesa L.C."/>
            <person name="Hao J."/>
            <person name="Honchak B.M."/>
            <person name="Karbach L.E."/>
            <person name="Kurdoglu A."/>
            <person name="Lahiri S."/>
            <person name="Mastrian S.D."/>
            <person name="Miyashita H."/>
            <person name="Page L."/>
            <person name="Ramakrishna P."/>
            <person name="Satoh S."/>
            <person name="Sattley W.M."/>
            <person name="Shimada Y."/>
            <person name="Taylor H.L."/>
            <person name="Tomo T."/>
            <person name="Tsuchiya T."/>
            <person name="Wang Z.T."/>
            <person name="Raymond J."/>
            <person name="Mimuro M."/>
            <person name="Blankenship R.E."/>
            <person name="Touchman J.W."/>
        </authorList>
    </citation>
    <scope>NUCLEOTIDE SEQUENCE [LARGE SCALE GENOMIC DNA]</scope>
    <source>
        <strain>MBIC 11017</strain>
    </source>
</reference>
<evidence type="ECO:0000255" key="1">
    <source>
        <dbReference type="HAMAP-Rule" id="MF_01355"/>
    </source>
</evidence>
<keyword id="KW-0472">Membrane</keyword>
<keyword id="KW-0520">NAD</keyword>
<keyword id="KW-0521">NADP</keyword>
<keyword id="KW-0618">Plastoquinone</keyword>
<keyword id="KW-0874">Quinone</keyword>
<keyword id="KW-1185">Reference proteome</keyword>
<keyword id="KW-0793">Thylakoid</keyword>
<keyword id="KW-1278">Translocase</keyword>
<keyword id="KW-0812">Transmembrane</keyword>
<keyword id="KW-1133">Transmembrane helix</keyword>
<keyword id="KW-0813">Transport</keyword>
<protein>
    <recommendedName>
        <fullName evidence="1">NAD(P)H-quinone oxidoreductase subunit L</fullName>
        <ecNumber evidence="1">7.1.1.-</ecNumber>
    </recommendedName>
    <alternativeName>
        <fullName evidence="1">NAD(P)H dehydrogenase I subunit L</fullName>
    </alternativeName>
    <alternativeName>
        <fullName>NDH-1 subunit L</fullName>
    </alternativeName>
    <alternativeName>
        <fullName>NDH-L</fullName>
    </alternativeName>
</protein>
<organism>
    <name type="scientific">Acaryochloris marina (strain MBIC 11017)</name>
    <dbReference type="NCBI Taxonomy" id="329726"/>
    <lineage>
        <taxon>Bacteria</taxon>
        <taxon>Bacillati</taxon>
        <taxon>Cyanobacteriota</taxon>
        <taxon>Cyanophyceae</taxon>
        <taxon>Acaryochloridales</taxon>
        <taxon>Acaryochloridaceae</taxon>
        <taxon>Acaryochloris</taxon>
    </lineage>
</organism>
<comment type="function">
    <text evidence="1">NDH-1 shuttles electrons from an unknown electron donor, via FMN and iron-sulfur (Fe-S) centers, to quinones in the respiratory and/or the photosynthetic chain. The immediate electron acceptor for the enzyme in this species is believed to be plastoquinone. Couples the redox reaction to proton translocation, and thus conserves the redox energy in a proton gradient. Cyanobacterial NDH-1 also plays a role in inorganic carbon-concentration.</text>
</comment>
<comment type="catalytic activity">
    <reaction evidence="1">
        <text>a plastoquinone + NADH + (n+1) H(+)(in) = a plastoquinol + NAD(+) + n H(+)(out)</text>
        <dbReference type="Rhea" id="RHEA:42608"/>
        <dbReference type="Rhea" id="RHEA-COMP:9561"/>
        <dbReference type="Rhea" id="RHEA-COMP:9562"/>
        <dbReference type="ChEBI" id="CHEBI:15378"/>
        <dbReference type="ChEBI" id="CHEBI:17757"/>
        <dbReference type="ChEBI" id="CHEBI:57540"/>
        <dbReference type="ChEBI" id="CHEBI:57945"/>
        <dbReference type="ChEBI" id="CHEBI:62192"/>
    </reaction>
</comment>
<comment type="catalytic activity">
    <reaction evidence="1">
        <text>a plastoquinone + NADPH + (n+1) H(+)(in) = a plastoquinol + NADP(+) + n H(+)(out)</text>
        <dbReference type="Rhea" id="RHEA:42612"/>
        <dbReference type="Rhea" id="RHEA-COMP:9561"/>
        <dbReference type="Rhea" id="RHEA-COMP:9562"/>
        <dbReference type="ChEBI" id="CHEBI:15378"/>
        <dbReference type="ChEBI" id="CHEBI:17757"/>
        <dbReference type="ChEBI" id="CHEBI:57783"/>
        <dbReference type="ChEBI" id="CHEBI:58349"/>
        <dbReference type="ChEBI" id="CHEBI:62192"/>
    </reaction>
</comment>
<comment type="subunit">
    <text evidence="1">NDH-1 can be composed of about 15 different subunits; different subcomplexes with different compositions have been identified which probably have different functions.</text>
</comment>
<comment type="subcellular location">
    <subcellularLocation>
        <location evidence="1">Cellular thylakoid membrane</location>
        <topology evidence="1">Multi-pass membrane protein</topology>
    </subcellularLocation>
</comment>
<comment type="similarity">
    <text evidence="1">Belongs to the complex I NdhL subunit family.</text>
</comment>
<accession>B0C6G0</accession>
<name>NDHL_ACAM1</name>
<proteinExistence type="inferred from homology"/>
<gene>
    <name evidence="1" type="primary">ndhL</name>
    <name type="ordered locus">AM1_1349</name>
</gene>
<sequence length="69" mass="8184">MVVNLILLLGLLGGYLLVMPAITYFYLQKRWYVASSLERGFMYFLVFFFFPSLLLLSPFLNFRPQPRKI</sequence>
<dbReference type="EC" id="7.1.1.-" evidence="1"/>
<dbReference type="EMBL" id="CP000828">
    <property type="protein sequence ID" value="ABW26381.1"/>
    <property type="molecule type" value="Genomic_DNA"/>
</dbReference>
<dbReference type="RefSeq" id="WP_010472853.1">
    <property type="nucleotide sequence ID" value="NC_009925.1"/>
</dbReference>
<dbReference type="SMR" id="B0C6G0"/>
<dbReference type="STRING" id="329726.AM1_1349"/>
<dbReference type="KEGG" id="amr:AM1_1349"/>
<dbReference type="eggNOG" id="ENOG5032ZM4">
    <property type="taxonomic scope" value="Bacteria"/>
</dbReference>
<dbReference type="HOGENOM" id="CLU_171077_0_0_3"/>
<dbReference type="Proteomes" id="UP000000268">
    <property type="component" value="Chromosome"/>
</dbReference>
<dbReference type="GO" id="GO:0031676">
    <property type="term" value="C:plasma membrane-derived thylakoid membrane"/>
    <property type="evidence" value="ECO:0007669"/>
    <property type="project" value="UniProtKB-SubCell"/>
</dbReference>
<dbReference type="GO" id="GO:0016655">
    <property type="term" value="F:oxidoreductase activity, acting on NAD(P)H, quinone or similar compound as acceptor"/>
    <property type="evidence" value="ECO:0007669"/>
    <property type="project" value="UniProtKB-UniRule"/>
</dbReference>
<dbReference type="GO" id="GO:0048038">
    <property type="term" value="F:quinone binding"/>
    <property type="evidence" value="ECO:0007669"/>
    <property type="project" value="UniProtKB-KW"/>
</dbReference>
<dbReference type="HAMAP" id="MF_01355">
    <property type="entry name" value="NDH1_NDH1L"/>
    <property type="match status" value="1"/>
</dbReference>
<dbReference type="InterPro" id="IPR019654">
    <property type="entry name" value="NADH-quinone_OxRdatse_su_L"/>
</dbReference>
<dbReference type="PANTHER" id="PTHR36727">
    <property type="entry name" value="NAD(P)H-QUINONE OXIDOREDUCTASE SUBUNIT L, CHLOROPLASTIC"/>
    <property type="match status" value="1"/>
</dbReference>
<dbReference type="PANTHER" id="PTHR36727:SF2">
    <property type="entry name" value="NAD(P)H-QUINONE OXIDOREDUCTASE SUBUNIT L, CHLOROPLASTIC"/>
    <property type="match status" value="1"/>
</dbReference>
<dbReference type="Pfam" id="PF10716">
    <property type="entry name" value="NdhL"/>
    <property type="match status" value="1"/>
</dbReference>